<protein>
    <recommendedName>
        <fullName evidence="1">Betaine aldehyde dehydrogenase</fullName>
        <shortName evidence="1">BADH</shortName>
        <ecNumber evidence="1">1.2.1.8</ecNumber>
    </recommendedName>
</protein>
<gene>
    <name evidence="1" type="primary">betB</name>
    <name type="ordered locus">YPK_2916</name>
</gene>
<organism>
    <name type="scientific">Yersinia pseudotuberculosis serotype O:3 (strain YPIII)</name>
    <dbReference type="NCBI Taxonomy" id="502800"/>
    <lineage>
        <taxon>Bacteria</taxon>
        <taxon>Pseudomonadati</taxon>
        <taxon>Pseudomonadota</taxon>
        <taxon>Gammaproteobacteria</taxon>
        <taxon>Enterobacterales</taxon>
        <taxon>Yersiniaceae</taxon>
        <taxon>Yersinia</taxon>
    </lineage>
</organism>
<evidence type="ECO:0000255" key="1">
    <source>
        <dbReference type="HAMAP-Rule" id="MF_00804"/>
    </source>
</evidence>
<name>BETB_YERPY</name>
<comment type="function">
    <text evidence="1">Involved in the biosynthesis of the osmoprotectant glycine betaine. Catalyzes the irreversible oxidation of betaine aldehyde to the corresponding acid.</text>
</comment>
<comment type="catalytic activity">
    <reaction evidence="1">
        <text>betaine aldehyde + NAD(+) + H2O = glycine betaine + NADH + 2 H(+)</text>
        <dbReference type="Rhea" id="RHEA:15305"/>
        <dbReference type="ChEBI" id="CHEBI:15377"/>
        <dbReference type="ChEBI" id="CHEBI:15378"/>
        <dbReference type="ChEBI" id="CHEBI:15710"/>
        <dbReference type="ChEBI" id="CHEBI:17750"/>
        <dbReference type="ChEBI" id="CHEBI:57540"/>
        <dbReference type="ChEBI" id="CHEBI:57945"/>
        <dbReference type="EC" id="1.2.1.8"/>
    </reaction>
    <physiologicalReaction direction="left-to-right" evidence="1">
        <dbReference type="Rhea" id="RHEA:15306"/>
    </physiologicalReaction>
</comment>
<comment type="cofactor">
    <cofactor evidence="1">
        <name>K(+)</name>
        <dbReference type="ChEBI" id="CHEBI:29103"/>
    </cofactor>
    <text evidence="1">Binds 2 potassium ions per subunit.</text>
</comment>
<comment type="pathway">
    <text evidence="1">Amine and polyamine biosynthesis; betaine biosynthesis via choline pathway; betaine from betaine aldehyde: step 1/1.</text>
</comment>
<comment type="subunit">
    <text evidence="1">Dimer of dimers.</text>
</comment>
<comment type="similarity">
    <text evidence="1">Belongs to the aldehyde dehydrogenase family.</text>
</comment>
<accession>B1JSQ9</accession>
<reference key="1">
    <citation type="submission" date="2008-02" db="EMBL/GenBank/DDBJ databases">
        <title>Complete sequence of Yersinia pseudotuberculosis YPIII.</title>
        <authorList>
            <consortium name="US DOE Joint Genome Institute"/>
            <person name="Copeland A."/>
            <person name="Lucas S."/>
            <person name="Lapidus A."/>
            <person name="Glavina del Rio T."/>
            <person name="Dalin E."/>
            <person name="Tice H."/>
            <person name="Bruce D."/>
            <person name="Goodwin L."/>
            <person name="Pitluck S."/>
            <person name="Munk A.C."/>
            <person name="Brettin T."/>
            <person name="Detter J.C."/>
            <person name="Han C."/>
            <person name="Tapia R."/>
            <person name="Schmutz J."/>
            <person name="Larimer F."/>
            <person name="Land M."/>
            <person name="Hauser L."/>
            <person name="Challacombe J.F."/>
            <person name="Green L."/>
            <person name="Lindler L.E."/>
            <person name="Nikolich M.P."/>
            <person name="Richardson P."/>
        </authorList>
    </citation>
    <scope>NUCLEOTIDE SEQUENCE [LARGE SCALE GENOMIC DNA]</scope>
    <source>
        <strain>YPIII</strain>
    </source>
</reference>
<dbReference type="EC" id="1.2.1.8" evidence="1"/>
<dbReference type="EMBL" id="CP000950">
    <property type="protein sequence ID" value="ACA69190.1"/>
    <property type="molecule type" value="Genomic_DNA"/>
</dbReference>
<dbReference type="RefSeq" id="WP_012304372.1">
    <property type="nucleotide sequence ID" value="NZ_CP009792.1"/>
</dbReference>
<dbReference type="SMR" id="B1JSQ9"/>
<dbReference type="KEGG" id="ypy:YPK_2916"/>
<dbReference type="PATRIC" id="fig|502800.11.peg.3637"/>
<dbReference type="UniPathway" id="UPA00529">
    <property type="reaction ID" value="UER00386"/>
</dbReference>
<dbReference type="GO" id="GO:0008802">
    <property type="term" value="F:betaine-aldehyde dehydrogenase (NAD+) activity"/>
    <property type="evidence" value="ECO:0007669"/>
    <property type="project" value="UniProtKB-UniRule"/>
</dbReference>
<dbReference type="GO" id="GO:0046872">
    <property type="term" value="F:metal ion binding"/>
    <property type="evidence" value="ECO:0007669"/>
    <property type="project" value="UniProtKB-KW"/>
</dbReference>
<dbReference type="GO" id="GO:0019285">
    <property type="term" value="P:glycine betaine biosynthetic process from choline"/>
    <property type="evidence" value="ECO:0007669"/>
    <property type="project" value="UniProtKB-UniRule"/>
</dbReference>
<dbReference type="CDD" id="cd07090">
    <property type="entry name" value="ALDH_F9_TMBADH"/>
    <property type="match status" value="1"/>
</dbReference>
<dbReference type="FunFam" id="3.40.309.10:FF:000014">
    <property type="entry name" value="NAD/NADP-dependent betaine aldehyde dehydrogenase"/>
    <property type="match status" value="1"/>
</dbReference>
<dbReference type="FunFam" id="3.40.605.10:FF:000007">
    <property type="entry name" value="NAD/NADP-dependent betaine aldehyde dehydrogenase"/>
    <property type="match status" value="1"/>
</dbReference>
<dbReference type="Gene3D" id="3.40.605.10">
    <property type="entry name" value="Aldehyde Dehydrogenase, Chain A, domain 1"/>
    <property type="match status" value="1"/>
</dbReference>
<dbReference type="Gene3D" id="3.40.309.10">
    <property type="entry name" value="Aldehyde Dehydrogenase, Chain A, domain 2"/>
    <property type="match status" value="1"/>
</dbReference>
<dbReference type="HAMAP" id="MF_00804">
    <property type="entry name" value="BADH"/>
    <property type="match status" value="1"/>
</dbReference>
<dbReference type="InterPro" id="IPR016161">
    <property type="entry name" value="Ald_DH/histidinol_DH"/>
</dbReference>
<dbReference type="InterPro" id="IPR016163">
    <property type="entry name" value="Ald_DH_C"/>
</dbReference>
<dbReference type="InterPro" id="IPR016160">
    <property type="entry name" value="Ald_DH_CS_CYS"/>
</dbReference>
<dbReference type="InterPro" id="IPR029510">
    <property type="entry name" value="Ald_DH_CS_GLU"/>
</dbReference>
<dbReference type="InterPro" id="IPR016162">
    <property type="entry name" value="Ald_DH_N"/>
</dbReference>
<dbReference type="InterPro" id="IPR015590">
    <property type="entry name" value="Aldehyde_DH_dom"/>
</dbReference>
<dbReference type="InterPro" id="IPR011264">
    <property type="entry name" value="BADH"/>
</dbReference>
<dbReference type="NCBIfam" id="TIGR01804">
    <property type="entry name" value="BADH"/>
    <property type="match status" value="1"/>
</dbReference>
<dbReference type="NCBIfam" id="NF009725">
    <property type="entry name" value="PRK13252.1"/>
    <property type="match status" value="1"/>
</dbReference>
<dbReference type="PANTHER" id="PTHR11699">
    <property type="entry name" value="ALDEHYDE DEHYDROGENASE-RELATED"/>
    <property type="match status" value="1"/>
</dbReference>
<dbReference type="Pfam" id="PF00171">
    <property type="entry name" value="Aldedh"/>
    <property type="match status" value="1"/>
</dbReference>
<dbReference type="SUPFAM" id="SSF53720">
    <property type="entry name" value="ALDH-like"/>
    <property type="match status" value="1"/>
</dbReference>
<dbReference type="PROSITE" id="PS00070">
    <property type="entry name" value="ALDEHYDE_DEHYDR_CYS"/>
    <property type="match status" value="1"/>
</dbReference>
<dbReference type="PROSITE" id="PS00687">
    <property type="entry name" value="ALDEHYDE_DEHYDR_GLU"/>
    <property type="match status" value="1"/>
</dbReference>
<feature type="chain" id="PRO_1000133963" description="Betaine aldehyde dehydrogenase">
    <location>
        <begin position="1"/>
        <end position="490"/>
    </location>
</feature>
<feature type="active site" description="Charge relay system" evidence="1">
    <location>
        <position position="162"/>
    </location>
</feature>
<feature type="active site" description="Proton acceptor" evidence="1">
    <location>
        <position position="252"/>
    </location>
</feature>
<feature type="active site" description="Nucleophile" evidence="1">
    <location>
        <position position="286"/>
    </location>
</feature>
<feature type="active site" description="Charge relay system" evidence="1">
    <location>
        <position position="464"/>
    </location>
</feature>
<feature type="binding site" evidence="1">
    <location>
        <position position="93"/>
    </location>
    <ligand>
        <name>K(+)</name>
        <dbReference type="ChEBI" id="CHEBI:29103"/>
        <label>1</label>
    </ligand>
</feature>
<feature type="binding site" evidence="1">
    <location>
        <begin position="150"/>
        <end position="152"/>
    </location>
    <ligand>
        <name>NAD(+)</name>
        <dbReference type="ChEBI" id="CHEBI:57540"/>
    </ligand>
</feature>
<feature type="binding site" evidence="1">
    <location>
        <begin position="176"/>
        <end position="179"/>
    </location>
    <ligand>
        <name>NAD(+)</name>
        <dbReference type="ChEBI" id="CHEBI:57540"/>
    </ligand>
</feature>
<feature type="binding site" evidence="1">
    <location>
        <position position="180"/>
    </location>
    <ligand>
        <name>K(+)</name>
        <dbReference type="ChEBI" id="CHEBI:29103"/>
        <label>1</label>
    </ligand>
</feature>
<feature type="binding site" evidence="1">
    <location>
        <begin position="230"/>
        <end position="233"/>
    </location>
    <ligand>
        <name>NAD(+)</name>
        <dbReference type="ChEBI" id="CHEBI:57540"/>
    </ligand>
</feature>
<feature type="binding site" evidence="1">
    <location>
        <position position="246"/>
    </location>
    <ligand>
        <name>K(+)</name>
        <dbReference type="ChEBI" id="CHEBI:29103"/>
        <label>2</label>
    </ligand>
</feature>
<feature type="binding site" evidence="1">
    <location>
        <position position="254"/>
    </location>
    <ligand>
        <name>NAD(+)</name>
        <dbReference type="ChEBI" id="CHEBI:57540"/>
    </ligand>
</feature>
<feature type="binding site" description="covalent" evidence="1">
    <location>
        <position position="286"/>
    </location>
    <ligand>
        <name>NAD(+)</name>
        <dbReference type="ChEBI" id="CHEBI:57540"/>
    </ligand>
</feature>
<feature type="binding site" evidence="1">
    <location>
        <position position="387"/>
    </location>
    <ligand>
        <name>NAD(+)</name>
        <dbReference type="ChEBI" id="CHEBI:57540"/>
    </ligand>
</feature>
<feature type="binding site" evidence="1">
    <location>
        <position position="457"/>
    </location>
    <ligand>
        <name>K(+)</name>
        <dbReference type="ChEBI" id="CHEBI:29103"/>
        <label>2</label>
    </ligand>
</feature>
<feature type="binding site" evidence="1">
    <location>
        <position position="460"/>
    </location>
    <ligand>
        <name>K(+)</name>
        <dbReference type="ChEBI" id="CHEBI:29103"/>
        <label>2</label>
    </ligand>
</feature>
<feature type="site" description="Seems to be a necessary countercharge to the potassium cations" evidence="1">
    <location>
        <position position="248"/>
    </location>
</feature>
<feature type="modified residue" description="Cysteine sulfenic acid (-SOH)" evidence="1">
    <location>
        <position position="286"/>
    </location>
</feature>
<sequence>MSRYGLQKLYINGAYTDSTSGDTFDAVNPANGECIAQLQAANAQDVDKAVAAAKQGQPVWAAMTAMERSRILRRAVDILRDRNDELAAIETADTGKPLSETRSVDIVTGADVLEYYAGLIPALEGQQIPLRGSAFVYTRREPLGVVAGIGAWNYPIQIALWKSAPALAAGNAMIFKPSEVTSLTALKLAEIYTEAGLPAGVFNVLTGSGDQVGQMLTEHPGIAKVSFTGGIASGKKVMANAAGSTLKDVTMELGGKSPLIIFADVDLDKAADIAMMANFYSSGQVCTNGTRVFVPQALQAAFEQKIVERVKRIHIGDPSDERVNFGPLVSFQHRDSVMRYIDSGKREGATLLIGGCSLTEGALAHGAYVAPTVFTHCRDDMQIVREEIFGPVMSILSYQSEEEVIRRANDTEYGLAAGVVTQDLNRAHRVIHQLQAGICWINTWGESAPEMPVGGYKHSGVGRENGISTLEHYTQIKSIQVELGSFNSVF</sequence>
<keyword id="KW-0479">Metal-binding</keyword>
<keyword id="KW-0520">NAD</keyword>
<keyword id="KW-0521">NADP</keyword>
<keyword id="KW-0558">Oxidation</keyword>
<keyword id="KW-0560">Oxidoreductase</keyword>
<keyword id="KW-0630">Potassium</keyword>
<proteinExistence type="inferred from homology"/>